<feature type="chain" id="PRO_0000271588" description="DNA protection during starvation protein">
    <location>
        <begin position="1"/>
        <end position="167"/>
    </location>
</feature>
<feature type="binding site" evidence="1">
    <location>
        <position position="51"/>
    </location>
    <ligand>
        <name>Fe cation</name>
        <dbReference type="ChEBI" id="CHEBI:24875"/>
    </ligand>
</feature>
<feature type="binding site" evidence="1">
    <location>
        <position position="78"/>
    </location>
    <ligand>
        <name>Fe cation</name>
        <dbReference type="ChEBI" id="CHEBI:24875"/>
    </ligand>
</feature>
<feature type="binding site" evidence="1">
    <location>
        <position position="82"/>
    </location>
    <ligand>
        <name>Fe cation</name>
        <dbReference type="ChEBI" id="CHEBI:24875"/>
    </ligand>
</feature>
<gene>
    <name evidence="1" type="primary">dps</name>
</gene>
<organism>
    <name type="scientific">Proteus hauseri</name>
    <dbReference type="NCBI Taxonomy" id="183417"/>
    <lineage>
        <taxon>Bacteria</taxon>
        <taxon>Pseudomonadati</taxon>
        <taxon>Pseudomonadota</taxon>
        <taxon>Gammaproteobacteria</taxon>
        <taxon>Enterobacterales</taxon>
        <taxon>Morganellaceae</taxon>
        <taxon>Proteus</taxon>
    </lineage>
</organism>
<name>DPS_PROHU</name>
<accession>Q6Y1R6</accession>
<evidence type="ECO:0000255" key="1">
    <source>
        <dbReference type="HAMAP-Rule" id="MF_01441"/>
    </source>
</evidence>
<proteinExistence type="inferred from homology"/>
<comment type="function">
    <text evidence="1">During stationary phase, binds the chromosome non-specifically, forming a highly ordered and stable dps-DNA co-crystal within which chromosomal DNA is condensed and protected from diverse damages. It protects DNA from oxidative damage by sequestering intracellular Fe(2+) ion and storing it in the form of Fe(3+) oxyhydroxide mineral, which can be released after reduction. One hydrogen peroxide oxidizes two Fe(2+) ions, which prevents hydroxyl radical production by the Fenton reaction.</text>
</comment>
<comment type="catalytic activity">
    <reaction evidence="1">
        <text>2 Fe(2+) + H2O2 + 2 H(+) = 2 Fe(3+) + 2 H2O</text>
        <dbReference type="Rhea" id="RHEA:48712"/>
        <dbReference type="ChEBI" id="CHEBI:15377"/>
        <dbReference type="ChEBI" id="CHEBI:15378"/>
        <dbReference type="ChEBI" id="CHEBI:16240"/>
        <dbReference type="ChEBI" id="CHEBI:29033"/>
        <dbReference type="ChEBI" id="CHEBI:29034"/>
    </reaction>
</comment>
<comment type="subunit">
    <text evidence="1">Homododecamer. The 12 subunits form a hollow sphere into which the mineral iron core of up to 500 Fe(3+) can be deposited.</text>
</comment>
<comment type="subcellular location">
    <subcellularLocation>
        <location evidence="1">Cytoplasm</location>
    </subcellularLocation>
</comment>
<comment type="similarity">
    <text evidence="1">Belongs to the Dps family.</text>
</comment>
<protein>
    <recommendedName>
        <fullName evidence="1">DNA protection during starvation protein</fullName>
        <ecNumber evidence="1">1.16.-.-</ecNumber>
    </recommendedName>
</protein>
<keyword id="KW-0963">Cytoplasm</keyword>
<keyword id="KW-0226">DNA condensation</keyword>
<keyword id="KW-0238">DNA-binding</keyword>
<keyword id="KW-0408">Iron</keyword>
<keyword id="KW-0409">Iron storage</keyword>
<keyword id="KW-0479">Metal-binding</keyword>
<keyword id="KW-0560">Oxidoreductase</keyword>
<reference key="1">
    <citation type="journal article" date="2004" name="Appl. Environ. Microbiol.">
        <title>Culture-independent analysis of fecal enterobacteria in environmental samples by single-cell mRNA profiling.</title>
        <authorList>
            <person name="Chen H."/>
            <person name="Ponniah G."/>
            <person name="Salonen N."/>
            <person name="Blum P."/>
        </authorList>
    </citation>
    <scope>NUCLEOTIDE SEQUENCE [GENOMIC DNA]</scope>
    <source>
        <strain>ATCC 13315 / DSM 30118 / JCM 1668 / NBRC 3851 / NCIMB 4175 / NCTC 4175 / NRRL B-3405</strain>
    </source>
</reference>
<dbReference type="EC" id="1.16.-.-" evidence="1"/>
<dbReference type="EMBL" id="AY191365">
    <property type="protein sequence ID" value="AAO47740.1"/>
    <property type="molecule type" value="Genomic_DNA"/>
</dbReference>
<dbReference type="SMR" id="Q6Y1R6"/>
<dbReference type="GO" id="GO:0005737">
    <property type="term" value="C:cytoplasm"/>
    <property type="evidence" value="ECO:0007669"/>
    <property type="project" value="UniProtKB-SubCell"/>
</dbReference>
<dbReference type="GO" id="GO:0003677">
    <property type="term" value="F:DNA binding"/>
    <property type="evidence" value="ECO:0007669"/>
    <property type="project" value="UniProtKB-UniRule"/>
</dbReference>
<dbReference type="GO" id="GO:0008199">
    <property type="term" value="F:ferric iron binding"/>
    <property type="evidence" value="ECO:0007669"/>
    <property type="project" value="UniProtKB-UniRule"/>
</dbReference>
<dbReference type="GO" id="GO:0016722">
    <property type="term" value="F:oxidoreductase activity, acting on metal ions"/>
    <property type="evidence" value="ECO:0007669"/>
    <property type="project" value="InterPro"/>
</dbReference>
<dbReference type="GO" id="GO:0030261">
    <property type="term" value="P:chromosome condensation"/>
    <property type="evidence" value="ECO:0007669"/>
    <property type="project" value="UniProtKB-KW"/>
</dbReference>
<dbReference type="GO" id="GO:0006879">
    <property type="term" value="P:intracellular iron ion homeostasis"/>
    <property type="evidence" value="ECO:0007669"/>
    <property type="project" value="UniProtKB-KW"/>
</dbReference>
<dbReference type="CDD" id="cd01043">
    <property type="entry name" value="DPS"/>
    <property type="match status" value="1"/>
</dbReference>
<dbReference type="FunFam" id="1.20.1260.10:FF:000003">
    <property type="entry name" value="DNA protection during starvation protein"/>
    <property type="match status" value="1"/>
</dbReference>
<dbReference type="Gene3D" id="1.20.1260.10">
    <property type="match status" value="1"/>
</dbReference>
<dbReference type="HAMAP" id="MF_01441">
    <property type="entry name" value="Dps"/>
    <property type="match status" value="1"/>
</dbReference>
<dbReference type="InterPro" id="IPR002177">
    <property type="entry name" value="DPS_DNA-bd"/>
</dbReference>
<dbReference type="InterPro" id="IPR023188">
    <property type="entry name" value="DPS_DNA-bd_CS"/>
</dbReference>
<dbReference type="InterPro" id="IPR023067">
    <property type="entry name" value="Dps_gammaproteobac"/>
</dbReference>
<dbReference type="InterPro" id="IPR012347">
    <property type="entry name" value="Ferritin-like"/>
</dbReference>
<dbReference type="InterPro" id="IPR009078">
    <property type="entry name" value="Ferritin-like_SF"/>
</dbReference>
<dbReference type="InterPro" id="IPR008331">
    <property type="entry name" value="Ferritin_DPS_dom"/>
</dbReference>
<dbReference type="NCBIfam" id="NF006975">
    <property type="entry name" value="PRK09448.1"/>
    <property type="match status" value="1"/>
</dbReference>
<dbReference type="PANTHER" id="PTHR42932:SF3">
    <property type="entry name" value="DNA PROTECTION DURING STARVATION PROTEIN"/>
    <property type="match status" value="1"/>
</dbReference>
<dbReference type="PANTHER" id="PTHR42932">
    <property type="entry name" value="GENERAL STRESS PROTEIN 20U"/>
    <property type="match status" value="1"/>
</dbReference>
<dbReference type="Pfam" id="PF00210">
    <property type="entry name" value="Ferritin"/>
    <property type="match status" value="1"/>
</dbReference>
<dbReference type="PIRSF" id="PIRSF005900">
    <property type="entry name" value="Dps"/>
    <property type="match status" value="1"/>
</dbReference>
<dbReference type="PRINTS" id="PR01346">
    <property type="entry name" value="HELNAPAPROT"/>
</dbReference>
<dbReference type="SUPFAM" id="SSF47240">
    <property type="entry name" value="Ferritin-like"/>
    <property type="match status" value="1"/>
</dbReference>
<dbReference type="PROSITE" id="PS00818">
    <property type="entry name" value="DPS_1"/>
    <property type="match status" value="1"/>
</dbReference>
<dbReference type="PROSITE" id="PS00819">
    <property type="entry name" value="DPS_2"/>
    <property type="match status" value="1"/>
</dbReference>
<sequence>MSTAKLVKSKATNLLYTRNDVSDSEKKATVELLNRQVIQFIDLSLITKQAHWNMRGANFIAVHEMLDGFRTALIDHLDTMAERAVQLGGVALGTTQVINSKTPLKSYPLDIHNVQDHLKELADRYAIVANDVRKAIGEAKDDDTADILTAASRDLDKFLWFIESNIR</sequence>